<dbReference type="EMBL" id="AY725011">
    <property type="protein sequence ID" value="AAU21189.1"/>
    <property type="molecule type" value="Genomic_DNA"/>
</dbReference>
<dbReference type="SMR" id="Q645T0"/>
<dbReference type="FunCoup" id="Q645T0">
    <property type="interactions" value="183"/>
</dbReference>
<dbReference type="STRING" id="9544.ENSMMUP00000061402"/>
<dbReference type="GlyCosmos" id="Q645T0">
    <property type="glycosylation" value="1 site, No reported glycans"/>
</dbReference>
<dbReference type="PaxDb" id="9544-ENSMMUP00000001983"/>
<dbReference type="eggNOG" id="ENOG502SY8P">
    <property type="taxonomic scope" value="Eukaryota"/>
</dbReference>
<dbReference type="InParanoid" id="Q645T0"/>
<dbReference type="Proteomes" id="UP000006718">
    <property type="component" value="Unassembled WGS sequence"/>
</dbReference>
<dbReference type="GO" id="GO:0016020">
    <property type="term" value="C:membrane"/>
    <property type="evidence" value="ECO:0000318"/>
    <property type="project" value="GO_Central"/>
</dbReference>
<dbReference type="GO" id="GO:0005886">
    <property type="term" value="C:plasma membrane"/>
    <property type="evidence" value="ECO:0007669"/>
    <property type="project" value="UniProtKB-ARBA"/>
</dbReference>
<dbReference type="GO" id="GO:0033038">
    <property type="term" value="F:bitter taste receptor activity"/>
    <property type="evidence" value="ECO:0000318"/>
    <property type="project" value="GO_Central"/>
</dbReference>
<dbReference type="GO" id="GO:0004930">
    <property type="term" value="F:G protein-coupled receptor activity"/>
    <property type="evidence" value="ECO:0007669"/>
    <property type="project" value="UniProtKB-KW"/>
</dbReference>
<dbReference type="GO" id="GO:0001580">
    <property type="term" value="P:detection of chemical stimulus involved in sensory perception of bitter taste"/>
    <property type="evidence" value="ECO:0000318"/>
    <property type="project" value="GO_Central"/>
</dbReference>
<dbReference type="FunFam" id="1.20.1070.10:FF:000042">
    <property type="entry name" value="Taste receptor type 2 member 7"/>
    <property type="match status" value="1"/>
</dbReference>
<dbReference type="Gene3D" id="1.20.1070.10">
    <property type="entry name" value="Rhodopsin 7-helix transmembrane proteins"/>
    <property type="match status" value="1"/>
</dbReference>
<dbReference type="InterPro" id="IPR017452">
    <property type="entry name" value="GPCR_Rhodpsn_7TM"/>
</dbReference>
<dbReference type="InterPro" id="IPR007960">
    <property type="entry name" value="TAS2R"/>
</dbReference>
<dbReference type="PANTHER" id="PTHR11394">
    <property type="entry name" value="TASTE RECEPTOR TYPE 2"/>
    <property type="match status" value="1"/>
</dbReference>
<dbReference type="PANTHER" id="PTHR11394:SF29">
    <property type="entry name" value="TASTE RECEPTOR TYPE 2 MEMBER 9"/>
    <property type="match status" value="1"/>
</dbReference>
<dbReference type="Pfam" id="PF05296">
    <property type="entry name" value="TAS2R"/>
    <property type="match status" value="1"/>
</dbReference>
<dbReference type="SUPFAM" id="SSF81321">
    <property type="entry name" value="Family A G protein-coupled receptor-like"/>
    <property type="match status" value="1"/>
</dbReference>
<dbReference type="PROSITE" id="PS50262">
    <property type="entry name" value="G_PROTEIN_RECEP_F1_2"/>
    <property type="match status" value="1"/>
</dbReference>
<proteinExistence type="inferred from homology"/>
<keyword id="KW-0297">G-protein coupled receptor</keyword>
<keyword id="KW-0325">Glycoprotein</keyword>
<keyword id="KW-0472">Membrane</keyword>
<keyword id="KW-0675">Receptor</keyword>
<keyword id="KW-1185">Reference proteome</keyword>
<keyword id="KW-0716">Sensory transduction</keyword>
<keyword id="KW-0919">Taste</keyword>
<keyword id="KW-0807">Transducer</keyword>
<keyword id="KW-0812">Transmembrane</keyword>
<keyword id="KW-1133">Transmembrane helix</keyword>
<gene>
    <name type="primary">TAS2R9</name>
</gene>
<name>TA2R9_MACMU</name>
<sequence>MPSTIEAIYIILIAGELTIGIWGNGFIVLVNCIDWLKRRDVSLIDIILISLAISRICLLCVISLDGFFILLFPGTYDTNVLESIMDAVWTFANNSSLWFTSCLSIFYLLKIANISHPFFFWLKLKINKVILAILLGSFLISLIISFPINGMWYNLFKVSHEENITWAFKVSTIPGAFKQLTLNLGAMVPFILCLISFFLLLFSLVRHTKQIQLHATGFRDPSTEAHMRAVKAVIIFLLLLILYYPVFLVMTSSTLIPQGKLVLMIGDIVTVIFPSSHSFILIMGNSKLRAAFLKMLRFVKGFLRRRKPFVP</sequence>
<comment type="function">
    <text evidence="1">Gustducin-coupled receptor implicated in the perception of bitter compounds in the oral cavity and the gastrointestinal tract. Signals through PLCB2 and the calcium-regulated cation channel TRPM5 (By similarity).</text>
</comment>
<comment type="subcellular location">
    <subcellularLocation>
        <location>Membrane</location>
        <topology>Multi-pass membrane protein</topology>
    </subcellularLocation>
</comment>
<comment type="miscellaneous">
    <text>Several bitter taste receptors are expressed in a single taste receptor cell.</text>
</comment>
<comment type="similarity">
    <text evidence="3">Belongs to the G-protein coupled receptor T2R family.</text>
</comment>
<feature type="chain" id="PRO_0000082233" description="Taste receptor type 2 member 9">
    <location>
        <begin position="1"/>
        <end position="311"/>
    </location>
</feature>
<feature type="topological domain" description="Extracellular" evidence="2">
    <location>
        <begin position="1"/>
        <end position="9"/>
    </location>
</feature>
<feature type="transmembrane region" description="Helical; Name=1" evidence="2">
    <location>
        <begin position="10"/>
        <end position="32"/>
    </location>
</feature>
<feature type="topological domain" description="Cytoplasmic" evidence="2">
    <location>
        <begin position="33"/>
        <end position="52"/>
    </location>
</feature>
<feature type="transmembrane region" description="Helical; Name=2" evidence="2">
    <location>
        <begin position="53"/>
        <end position="72"/>
    </location>
</feature>
<feature type="topological domain" description="Extracellular" evidence="2">
    <location>
        <begin position="73"/>
        <end position="86"/>
    </location>
</feature>
<feature type="transmembrane region" description="Helical; Name=3" evidence="2">
    <location>
        <begin position="87"/>
        <end position="109"/>
    </location>
</feature>
<feature type="topological domain" description="Cytoplasmic" evidence="2">
    <location>
        <begin position="110"/>
        <end position="128"/>
    </location>
</feature>
<feature type="transmembrane region" description="Helical; Name=4" evidence="2">
    <location>
        <begin position="129"/>
        <end position="146"/>
    </location>
</feature>
<feature type="topological domain" description="Extracellular" evidence="2">
    <location>
        <begin position="147"/>
        <end position="179"/>
    </location>
</feature>
<feature type="transmembrane region" description="Helical; Name=5" evidence="2">
    <location>
        <begin position="180"/>
        <end position="202"/>
    </location>
</feature>
<feature type="topological domain" description="Cytoplasmic" evidence="2">
    <location>
        <begin position="203"/>
        <end position="233"/>
    </location>
</feature>
<feature type="transmembrane region" description="Helical; Name=6" evidence="2">
    <location>
        <begin position="234"/>
        <end position="256"/>
    </location>
</feature>
<feature type="topological domain" description="Extracellular" evidence="2">
    <location>
        <begin position="257"/>
        <end position="260"/>
    </location>
</feature>
<feature type="transmembrane region" description="Helical; Name=7" evidence="2">
    <location>
        <begin position="261"/>
        <end position="283"/>
    </location>
</feature>
<feature type="topological domain" description="Cytoplasmic" evidence="2">
    <location>
        <begin position="284"/>
        <end position="311"/>
    </location>
</feature>
<feature type="glycosylation site" description="N-linked (GlcNAc...) asparagine" evidence="2">
    <location>
        <position position="163"/>
    </location>
</feature>
<reference key="1">
    <citation type="journal article" date="2005" name="Mol. Biol. Evol.">
        <title>Evolution of bitter taste receptors in humans and apes.</title>
        <authorList>
            <person name="Fischer A."/>
            <person name="Gilad Y."/>
            <person name="Man O."/>
            <person name="Paeaebo S."/>
        </authorList>
    </citation>
    <scope>NUCLEOTIDE SEQUENCE [GENOMIC DNA]</scope>
</reference>
<evidence type="ECO:0000250" key="1"/>
<evidence type="ECO:0000255" key="2"/>
<evidence type="ECO:0000305" key="3"/>
<accession>Q645T0</accession>
<organism>
    <name type="scientific">Macaca mulatta</name>
    <name type="common">Rhesus macaque</name>
    <dbReference type="NCBI Taxonomy" id="9544"/>
    <lineage>
        <taxon>Eukaryota</taxon>
        <taxon>Metazoa</taxon>
        <taxon>Chordata</taxon>
        <taxon>Craniata</taxon>
        <taxon>Vertebrata</taxon>
        <taxon>Euteleostomi</taxon>
        <taxon>Mammalia</taxon>
        <taxon>Eutheria</taxon>
        <taxon>Euarchontoglires</taxon>
        <taxon>Primates</taxon>
        <taxon>Haplorrhini</taxon>
        <taxon>Catarrhini</taxon>
        <taxon>Cercopithecidae</taxon>
        <taxon>Cercopithecinae</taxon>
        <taxon>Macaca</taxon>
    </lineage>
</organism>
<protein>
    <recommendedName>
        <fullName>Taste receptor type 2 member 9</fullName>
        <shortName>T2R9</shortName>
    </recommendedName>
</protein>